<accession>Q6MU82</accession>
<comment type="function">
    <text evidence="1">Catalyzes the GTP-dependent ribosomal translocation step during translation elongation. During this step, the ribosome changes from the pre-translocational (PRE) to the post-translocational (POST) state as the newly formed A-site-bound peptidyl-tRNA and P-site-bound deacylated tRNA move to the P and E sites, respectively. Catalyzes the coordinated movement of the two tRNA molecules, the mRNA and conformational changes in the ribosome.</text>
</comment>
<comment type="subcellular location">
    <subcellularLocation>
        <location evidence="1">Cytoplasm</location>
    </subcellularLocation>
</comment>
<comment type="similarity">
    <text evidence="1">Belongs to the TRAFAC class translation factor GTPase superfamily. Classic translation factor GTPase family. EF-G/EF-2 subfamily.</text>
</comment>
<proteinExistence type="inferred from homology"/>
<gene>
    <name evidence="1" type="primary">fusA</name>
    <name type="ordered locus">MSC_0159</name>
</gene>
<keyword id="KW-0963">Cytoplasm</keyword>
<keyword id="KW-0251">Elongation factor</keyword>
<keyword id="KW-0342">GTP-binding</keyword>
<keyword id="KW-0547">Nucleotide-binding</keyword>
<keyword id="KW-0648">Protein biosynthesis</keyword>
<keyword id="KW-1185">Reference proteome</keyword>
<dbReference type="EMBL" id="BX293980">
    <property type="protein sequence ID" value="CAE76804.1"/>
    <property type="molecule type" value="Genomic_DNA"/>
</dbReference>
<dbReference type="RefSeq" id="NP_975162.1">
    <property type="nucleotide sequence ID" value="NC_005364.2"/>
</dbReference>
<dbReference type="RefSeq" id="WP_011166361.1">
    <property type="nucleotide sequence ID" value="NC_005364.2"/>
</dbReference>
<dbReference type="SMR" id="Q6MU82"/>
<dbReference type="STRING" id="272632.MSC_0159"/>
<dbReference type="KEGG" id="mmy:MSC_0159"/>
<dbReference type="PATRIC" id="fig|272632.4.peg.168"/>
<dbReference type="eggNOG" id="COG0480">
    <property type="taxonomic scope" value="Bacteria"/>
</dbReference>
<dbReference type="HOGENOM" id="CLU_002794_4_1_14"/>
<dbReference type="Proteomes" id="UP000001016">
    <property type="component" value="Chromosome"/>
</dbReference>
<dbReference type="GO" id="GO:0005737">
    <property type="term" value="C:cytoplasm"/>
    <property type="evidence" value="ECO:0007669"/>
    <property type="project" value="UniProtKB-SubCell"/>
</dbReference>
<dbReference type="GO" id="GO:0005525">
    <property type="term" value="F:GTP binding"/>
    <property type="evidence" value="ECO:0007669"/>
    <property type="project" value="UniProtKB-UniRule"/>
</dbReference>
<dbReference type="GO" id="GO:0003924">
    <property type="term" value="F:GTPase activity"/>
    <property type="evidence" value="ECO:0007669"/>
    <property type="project" value="InterPro"/>
</dbReference>
<dbReference type="GO" id="GO:0003746">
    <property type="term" value="F:translation elongation factor activity"/>
    <property type="evidence" value="ECO:0007669"/>
    <property type="project" value="UniProtKB-UniRule"/>
</dbReference>
<dbReference type="GO" id="GO:0032790">
    <property type="term" value="P:ribosome disassembly"/>
    <property type="evidence" value="ECO:0007669"/>
    <property type="project" value="TreeGrafter"/>
</dbReference>
<dbReference type="CDD" id="cd01886">
    <property type="entry name" value="EF-G"/>
    <property type="match status" value="1"/>
</dbReference>
<dbReference type="CDD" id="cd16262">
    <property type="entry name" value="EFG_III"/>
    <property type="match status" value="1"/>
</dbReference>
<dbReference type="CDD" id="cd01434">
    <property type="entry name" value="EFG_mtEFG1_IV"/>
    <property type="match status" value="1"/>
</dbReference>
<dbReference type="CDD" id="cd03713">
    <property type="entry name" value="EFG_mtEFG_C"/>
    <property type="match status" value="1"/>
</dbReference>
<dbReference type="CDD" id="cd04088">
    <property type="entry name" value="EFG_mtEFG_II"/>
    <property type="match status" value="1"/>
</dbReference>
<dbReference type="FunFam" id="2.40.30.10:FF:000006">
    <property type="entry name" value="Elongation factor G"/>
    <property type="match status" value="1"/>
</dbReference>
<dbReference type="FunFam" id="3.30.230.10:FF:000003">
    <property type="entry name" value="Elongation factor G"/>
    <property type="match status" value="1"/>
</dbReference>
<dbReference type="FunFam" id="3.30.70.240:FF:000001">
    <property type="entry name" value="Elongation factor G"/>
    <property type="match status" value="1"/>
</dbReference>
<dbReference type="FunFam" id="3.30.70.870:FF:000001">
    <property type="entry name" value="Elongation factor G"/>
    <property type="match status" value="1"/>
</dbReference>
<dbReference type="FunFam" id="3.40.50.300:FF:000029">
    <property type="entry name" value="Elongation factor G"/>
    <property type="match status" value="1"/>
</dbReference>
<dbReference type="Gene3D" id="3.30.230.10">
    <property type="match status" value="1"/>
</dbReference>
<dbReference type="Gene3D" id="3.30.70.240">
    <property type="match status" value="1"/>
</dbReference>
<dbReference type="Gene3D" id="3.30.70.870">
    <property type="entry name" value="Elongation Factor G (Translational Gtpase), domain 3"/>
    <property type="match status" value="1"/>
</dbReference>
<dbReference type="Gene3D" id="3.40.50.300">
    <property type="entry name" value="P-loop containing nucleotide triphosphate hydrolases"/>
    <property type="match status" value="1"/>
</dbReference>
<dbReference type="Gene3D" id="2.40.30.10">
    <property type="entry name" value="Translation factors"/>
    <property type="match status" value="1"/>
</dbReference>
<dbReference type="HAMAP" id="MF_00054_B">
    <property type="entry name" value="EF_G_EF_2_B"/>
    <property type="match status" value="1"/>
</dbReference>
<dbReference type="InterPro" id="IPR053905">
    <property type="entry name" value="EF-G-like_DII"/>
</dbReference>
<dbReference type="InterPro" id="IPR041095">
    <property type="entry name" value="EFG_II"/>
</dbReference>
<dbReference type="InterPro" id="IPR009022">
    <property type="entry name" value="EFG_III"/>
</dbReference>
<dbReference type="InterPro" id="IPR035647">
    <property type="entry name" value="EFG_III/V"/>
</dbReference>
<dbReference type="InterPro" id="IPR047872">
    <property type="entry name" value="EFG_IV"/>
</dbReference>
<dbReference type="InterPro" id="IPR035649">
    <property type="entry name" value="EFG_V"/>
</dbReference>
<dbReference type="InterPro" id="IPR000640">
    <property type="entry name" value="EFG_V-like"/>
</dbReference>
<dbReference type="InterPro" id="IPR031157">
    <property type="entry name" value="G_TR_CS"/>
</dbReference>
<dbReference type="InterPro" id="IPR027417">
    <property type="entry name" value="P-loop_NTPase"/>
</dbReference>
<dbReference type="InterPro" id="IPR020568">
    <property type="entry name" value="Ribosomal_Su5_D2-typ_SF"/>
</dbReference>
<dbReference type="InterPro" id="IPR014721">
    <property type="entry name" value="Ribsml_uS5_D2-typ_fold_subgr"/>
</dbReference>
<dbReference type="InterPro" id="IPR005225">
    <property type="entry name" value="Small_GTP-bd"/>
</dbReference>
<dbReference type="InterPro" id="IPR000795">
    <property type="entry name" value="T_Tr_GTP-bd_dom"/>
</dbReference>
<dbReference type="InterPro" id="IPR009000">
    <property type="entry name" value="Transl_B-barrel_sf"/>
</dbReference>
<dbReference type="InterPro" id="IPR004540">
    <property type="entry name" value="Transl_elong_EFG/EF2"/>
</dbReference>
<dbReference type="InterPro" id="IPR005517">
    <property type="entry name" value="Transl_elong_EFG/EF2_IV"/>
</dbReference>
<dbReference type="NCBIfam" id="TIGR00484">
    <property type="entry name" value="EF-G"/>
    <property type="match status" value="1"/>
</dbReference>
<dbReference type="NCBIfam" id="NF009381">
    <property type="entry name" value="PRK12740.1-5"/>
    <property type="match status" value="1"/>
</dbReference>
<dbReference type="NCBIfam" id="TIGR00231">
    <property type="entry name" value="small_GTP"/>
    <property type="match status" value="1"/>
</dbReference>
<dbReference type="PANTHER" id="PTHR43261:SF1">
    <property type="entry name" value="RIBOSOME-RELEASING FACTOR 2, MITOCHONDRIAL"/>
    <property type="match status" value="1"/>
</dbReference>
<dbReference type="PANTHER" id="PTHR43261">
    <property type="entry name" value="TRANSLATION ELONGATION FACTOR G-RELATED"/>
    <property type="match status" value="1"/>
</dbReference>
<dbReference type="Pfam" id="PF22042">
    <property type="entry name" value="EF-G_D2"/>
    <property type="match status" value="1"/>
</dbReference>
<dbReference type="Pfam" id="PF00679">
    <property type="entry name" value="EFG_C"/>
    <property type="match status" value="1"/>
</dbReference>
<dbReference type="Pfam" id="PF14492">
    <property type="entry name" value="EFG_III"/>
    <property type="match status" value="1"/>
</dbReference>
<dbReference type="Pfam" id="PF03764">
    <property type="entry name" value="EFG_IV"/>
    <property type="match status" value="1"/>
</dbReference>
<dbReference type="Pfam" id="PF00009">
    <property type="entry name" value="GTP_EFTU"/>
    <property type="match status" value="1"/>
</dbReference>
<dbReference type="PRINTS" id="PR00315">
    <property type="entry name" value="ELONGATNFCT"/>
</dbReference>
<dbReference type="SMART" id="SM00838">
    <property type="entry name" value="EFG_C"/>
    <property type="match status" value="1"/>
</dbReference>
<dbReference type="SMART" id="SM00889">
    <property type="entry name" value="EFG_IV"/>
    <property type="match status" value="1"/>
</dbReference>
<dbReference type="SUPFAM" id="SSF54980">
    <property type="entry name" value="EF-G C-terminal domain-like"/>
    <property type="match status" value="2"/>
</dbReference>
<dbReference type="SUPFAM" id="SSF52540">
    <property type="entry name" value="P-loop containing nucleoside triphosphate hydrolases"/>
    <property type="match status" value="1"/>
</dbReference>
<dbReference type="SUPFAM" id="SSF54211">
    <property type="entry name" value="Ribosomal protein S5 domain 2-like"/>
    <property type="match status" value="1"/>
</dbReference>
<dbReference type="SUPFAM" id="SSF50447">
    <property type="entry name" value="Translation proteins"/>
    <property type="match status" value="1"/>
</dbReference>
<dbReference type="PROSITE" id="PS00301">
    <property type="entry name" value="G_TR_1"/>
    <property type="match status" value="1"/>
</dbReference>
<dbReference type="PROSITE" id="PS51722">
    <property type="entry name" value="G_TR_2"/>
    <property type="match status" value="1"/>
</dbReference>
<name>EFG_MYCMS</name>
<feature type="chain" id="PRO_0000091160" description="Elongation factor G">
    <location>
        <begin position="1"/>
        <end position="689"/>
    </location>
</feature>
<feature type="domain" description="tr-type G">
    <location>
        <begin position="8"/>
        <end position="282"/>
    </location>
</feature>
<feature type="binding site" evidence="1">
    <location>
        <begin position="17"/>
        <end position="24"/>
    </location>
    <ligand>
        <name>GTP</name>
        <dbReference type="ChEBI" id="CHEBI:37565"/>
    </ligand>
</feature>
<feature type="binding site" evidence="1">
    <location>
        <begin position="81"/>
        <end position="85"/>
    </location>
    <ligand>
        <name>GTP</name>
        <dbReference type="ChEBI" id="CHEBI:37565"/>
    </ligand>
</feature>
<feature type="binding site" evidence="1">
    <location>
        <begin position="135"/>
        <end position="138"/>
    </location>
    <ligand>
        <name>GTP</name>
        <dbReference type="ChEBI" id="CHEBI:37565"/>
    </ligand>
</feature>
<protein>
    <recommendedName>
        <fullName evidence="1">Elongation factor G</fullName>
        <shortName evidence="1">EF-G</shortName>
    </recommendedName>
</protein>
<organism>
    <name type="scientific">Mycoplasma mycoides subsp. mycoides SC (strain CCUG 32753 / NCTC 10114 / PG1)</name>
    <dbReference type="NCBI Taxonomy" id="272632"/>
    <lineage>
        <taxon>Bacteria</taxon>
        <taxon>Bacillati</taxon>
        <taxon>Mycoplasmatota</taxon>
        <taxon>Mollicutes</taxon>
        <taxon>Mycoplasmataceae</taxon>
        <taxon>Mycoplasma</taxon>
    </lineage>
</organism>
<sequence length="689" mass="76185">MAREYSLLNTRNIGIMAHIDAGKTTTTERILFHTGKIHKIGETHEGASQMDWMAQEQERGITITSAATTAFWKNTRFNIIDTPGHVDFTVEVERSLRVLDGAVAVLDGQSGVEPQTETVWRQATNYKVPRIVFVNKMDKTGADFIYSVKTIGDRLGAKAAPIQLPIGAEENFTGIIDLVEMKAYEFDGKPEENYKEIEIPTNLLEQAKELRAHLVEVAVEYDEELLMKFLDGGEISISELKSAIRKGVINADFFPVLAGSAFKNKGVKLLLDAVVDYLPSPLDIPSIKGILPTGEEVERHADDTEPFSALAFKVMTDPFVGKLTFFRVYSGILTKGSYVLNSTKQQKERVGRILQMHANNRTEIEEVYSGDIATAVGLKNTTTGDTLCDEKGEIILESMVFPEPVIQLALEPKTKADQEKMSIALSKLAEEDPTFRTYTDDETGQTIIAGMGELHLDIIVDRMKREFNVATNVGAPQVSYRETIKLPGKAEGKYIKQSGGRGSYGHVVIEFEPNKDKGFEWVDKITGGRVSKEYINSARVGLENALRNGVIAGYPMIDVKATIVDGSMHEVDSNEMAYKIAASMALKEASKKMNPVVLEPIMNVEVTVPDEYYGDVMGNISSKRGIIEGSEQRGNAQTIKSKVPLTEMFGYATELRSFTQGRGNYTMIFSHYAEAPKAIADEIIKKSGK</sequence>
<reference key="1">
    <citation type="journal article" date="2004" name="Genome Res.">
        <title>The genome sequence of Mycoplasma mycoides subsp. mycoides SC type strain PG1T, the causative agent of contagious bovine pleuropneumonia (CBPP).</title>
        <authorList>
            <person name="Westberg J."/>
            <person name="Persson A."/>
            <person name="Holmberg A."/>
            <person name="Goesmann A."/>
            <person name="Lundeberg J."/>
            <person name="Johansson K.-E."/>
            <person name="Pettersson B."/>
            <person name="Uhlen M."/>
        </authorList>
    </citation>
    <scope>NUCLEOTIDE SEQUENCE [LARGE SCALE GENOMIC DNA]</scope>
    <source>
        <strain>CCUG 32753 / NCTC 10114 / PG1</strain>
    </source>
</reference>
<evidence type="ECO:0000255" key="1">
    <source>
        <dbReference type="HAMAP-Rule" id="MF_00054"/>
    </source>
</evidence>